<protein>
    <recommendedName>
        <fullName evidence="1">tRNA-specific 2-thiouridylase MnmA</fullName>
        <ecNumber evidence="1">2.8.1.13</ecNumber>
    </recommendedName>
</protein>
<name>MNMA_STRP7</name>
<organism>
    <name type="scientific">Streptococcus pneumoniae (strain 70585)</name>
    <dbReference type="NCBI Taxonomy" id="488221"/>
    <lineage>
        <taxon>Bacteria</taxon>
        <taxon>Bacillati</taxon>
        <taxon>Bacillota</taxon>
        <taxon>Bacilli</taxon>
        <taxon>Lactobacillales</taxon>
        <taxon>Streptococcaceae</taxon>
        <taxon>Streptococcus</taxon>
    </lineage>
</organism>
<keyword id="KW-0067">ATP-binding</keyword>
<keyword id="KW-0963">Cytoplasm</keyword>
<keyword id="KW-1015">Disulfide bond</keyword>
<keyword id="KW-0547">Nucleotide-binding</keyword>
<keyword id="KW-0694">RNA-binding</keyword>
<keyword id="KW-0808">Transferase</keyword>
<keyword id="KW-0819">tRNA processing</keyword>
<keyword id="KW-0820">tRNA-binding</keyword>
<accession>C1CAE7</accession>
<gene>
    <name evidence="1" type="primary">mnmA</name>
    <name type="ordered locus">SP70585_0198</name>
</gene>
<comment type="function">
    <text evidence="1">Catalyzes the 2-thiolation of uridine at the wobble position (U34) of tRNA, leading to the formation of s(2)U34.</text>
</comment>
<comment type="catalytic activity">
    <reaction evidence="1">
        <text>S-sulfanyl-L-cysteinyl-[protein] + uridine(34) in tRNA + AH2 + ATP = 2-thiouridine(34) in tRNA + L-cysteinyl-[protein] + A + AMP + diphosphate + H(+)</text>
        <dbReference type="Rhea" id="RHEA:47032"/>
        <dbReference type="Rhea" id="RHEA-COMP:10131"/>
        <dbReference type="Rhea" id="RHEA-COMP:11726"/>
        <dbReference type="Rhea" id="RHEA-COMP:11727"/>
        <dbReference type="Rhea" id="RHEA-COMP:11728"/>
        <dbReference type="ChEBI" id="CHEBI:13193"/>
        <dbReference type="ChEBI" id="CHEBI:15378"/>
        <dbReference type="ChEBI" id="CHEBI:17499"/>
        <dbReference type="ChEBI" id="CHEBI:29950"/>
        <dbReference type="ChEBI" id="CHEBI:30616"/>
        <dbReference type="ChEBI" id="CHEBI:33019"/>
        <dbReference type="ChEBI" id="CHEBI:61963"/>
        <dbReference type="ChEBI" id="CHEBI:65315"/>
        <dbReference type="ChEBI" id="CHEBI:87170"/>
        <dbReference type="ChEBI" id="CHEBI:456215"/>
        <dbReference type="EC" id="2.8.1.13"/>
    </reaction>
</comment>
<comment type="subcellular location">
    <subcellularLocation>
        <location evidence="1">Cytoplasm</location>
    </subcellularLocation>
</comment>
<comment type="similarity">
    <text evidence="1">Belongs to the MnmA/TRMU family.</text>
</comment>
<proteinExistence type="inferred from homology"/>
<reference key="1">
    <citation type="journal article" date="2010" name="Genome Biol.">
        <title>Structure and dynamics of the pan-genome of Streptococcus pneumoniae and closely related species.</title>
        <authorList>
            <person name="Donati C."/>
            <person name="Hiller N.L."/>
            <person name="Tettelin H."/>
            <person name="Muzzi A."/>
            <person name="Croucher N.J."/>
            <person name="Angiuoli S.V."/>
            <person name="Oggioni M."/>
            <person name="Dunning Hotopp J.C."/>
            <person name="Hu F.Z."/>
            <person name="Riley D.R."/>
            <person name="Covacci A."/>
            <person name="Mitchell T.J."/>
            <person name="Bentley S.D."/>
            <person name="Kilian M."/>
            <person name="Ehrlich G.D."/>
            <person name="Rappuoli R."/>
            <person name="Moxon E.R."/>
            <person name="Masignani V."/>
        </authorList>
    </citation>
    <scope>NUCLEOTIDE SEQUENCE [LARGE SCALE GENOMIC DNA]</scope>
    <source>
        <strain>70585</strain>
    </source>
</reference>
<sequence length="373" mass="41642">MSDNSKTRVVVGMSGGVDSSVTALLLKEQGYDVIGIFMKNWDDTDENGVCTATEDYKDVVAVADQIGIPYYSVNFEKEYWDRVFEYFLAEYRAGRTPNPDVMCNKEIKFKAFLDYAMTLGADYVATGHYARVVRDEDGTVHMLRGVDNGKDQTYFLSQLSQEQLQKTMFPLGHLEKPEVRKLAEEAGLSTAKKKDSTGICFIGEKNFKNFLSNYLPAQPGRMMTVDGRDMGEHAGLMYYTIGQRGGLGIGGQHGGDNAPWFVVGKDLSKNILYVGQGFYHDSLMSTSLEASQVHFTRDMPEEFTLECTAKFRYRQPDSKVTVHVKGDKAEVIFAEPQRAITPGQAVVFYDGEECLGGGLIDNAYRDGQVCQYI</sequence>
<dbReference type="EC" id="2.8.1.13" evidence="1"/>
<dbReference type="EMBL" id="CP000918">
    <property type="protein sequence ID" value="ACO17592.1"/>
    <property type="molecule type" value="Genomic_DNA"/>
</dbReference>
<dbReference type="RefSeq" id="WP_001282987.1">
    <property type="nucleotide sequence ID" value="NC_012468.1"/>
</dbReference>
<dbReference type="SMR" id="C1CAE7"/>
<dbReference type="KEGG" id="snm:SP70585_0198"/>
<dbReference type="HOGENOM" id="CLU_035188_1_0_9"/>
<dbReference type="Proteomes" id="UP000002211">
    <property type="component" value="Chromosome"/>
</dbReference>
<dbReference type="GO" id="GO:0005737">
    <property type="term" value="C:cytoplasm"/>
    <property type="evidence" value="ECO:0007669"/>
    <property type="project" value="UniProtKB-SubCell"/>
</dbReference>
<dbReference type="GO" id="GO:0005524">
    <property type="term" value="F:ATP binding"/>
    <property type="evidence" value="ECO:0007669"/>
    <property type="project" value="UniProtKB-KW"/>
</dbReference>
<dbReference type="GO" id="GO:0000049">
    <property type="term" value="F:tRNA binding"/>
    <property type="evidence" value="ECO:0007669"/>
    <property type="project" value="UniProtKB-KW"/>
</dbReference>
<dbReference type="GO" id="GO:0103016">
    <property type="term" value="F:tRNA-uridine 2-sulfurtransferase activity"/>
    <property type="evidence" value="ECO:0007669"/>
    <property type="project" value="UniProtKB-EC"/>
</dbReference>
<dbReference type="GO" id="GO:0002143">
    <property type="term" value="P:tRNA wobble position uridine thiolation"/>
    <property type="evidence" value="ECO:0007669"/>
    <property type="project" value="TreeGrafter"/>
</dbReference>
<dbReference type="CDD" id="cd01998">
    <property type="entry name" value="MnmA_TRMU-like"/>
    <property type="match status" value="1"/>
</dbReference>
<dbReference type="FunFam" id="2.30.30.280:FF:000001">
    <property type="entry name" value="tRNA-specific 2-thiouridylase MnmA"/>
    <property type="match status" value="1"/>
</dbReference>
<dbReference type="FunFam" id="2.40.30.10:FF:000023">
    <property type="entry name" value="tRNA-specific 2-thiouridylase MnmA"/>
    <property type="match status" value="1"/>
</dbReference>
<dbReference type="FunFam" id="3.40.50.620:FF:000004">
    <property type="entry name" value="tRNA-specific 2-thiouridylase MnmA"/>
    <property type="match status" value="1"/>
</dbReference>
<dbReference type="Gene3D" id="2.30.30.280">
    <property type="entry name" value="Adenine nucleotide alpha hydrolases-like domains"/>
    <property type="match status" value="1"/>
</dbReference>
<dbReference type="Gene3D" id="3.40.50.620">
    <property type="entry name" value="HUPs"/>
    <property type="match status" value="1"/>
</dbReference>
<dbReference type="Gene3D" id="2.40.30.10">
    <property type="entry name" value="Translation factors"/>
    <property type="match status" value="1"/>
</dbReference>
<dbReference type="HAMAP" id="MF_00144">
    <property type="entry name" value="tRNA_thiouridyl_MnmA"/>
    <property type="match status" value="1"/>
</dbReference>
<dbReference type="InterPro" id="IPR004506">
    <property type="entry name" value="MnmA-like"/>
</dbReference>
<dbReference type="InterPro" id="IPR046885">
    <property type="entry name" value="MnmA-like_C"/>
</dbReference>
<dbReference type="InterPro" id="IPR046884">
    <property type="entry name" value="MnmA-like_central"/>
</dbReference>
<dbReference type="InterPro" id="IPR023382">
    <property type="entry name" value="MnmA-like_central_sf"/>
</dbReference>
<dbReference type="InterPro" id="IPR014729">
    <property type="entry name" value="Rossmann-like_a/b/a_fold"/>
</dbReference>
<dbReference type="NCBIfam" id="NF001138">
    <property type="entry name" value="PRK00143.1"/>
    <property type="match status" value="1"/>
</dbReference>
<dbReference type="NCBIfam" id="TIGR00420">
    <property type="entry name" value="trmU"/>
    <property type="match status" value="1"/>
</dbReference>
<dbReference type="PANTHER" id="PTHR11933:SF5">
    <property type="entry name" value="MITOCHONDRIAL TRNA-SPECIFIC 2-THIOURIDYLASE 1"/>
    <property type="match status" value="1"/>
</dbReference>
<dbReference type="PANTHER" id="PTHR11933">
    <property type="entry name" value="TRNA 5-METHYLAMINOMETHYL-2-THIOURIDYLATE -METHYLTRANSFERASE"/>
    <property type="match status" value="1"/>
</dbReference>
<dbReference type="Pfam" id="PF03054">
    <property type="entry name" value="tRNA_Me_trans"/>
    <property type="match status" value="1"/>
</dbReference>
<dbReference type="Pfam" id="PF20258">
    <property type="entry name" value="tRNA_Me_trans_C"/>
    <property type="match status" value="1"/>
</dbReference>
<dbReference type="Pfam" id="PF20259">
    <property type="entry name" value="tRNA_Me_trans_M"/>
    <property type="match status" value="1"/>
</dbReference>
<dbReference type="SUPFAM" id="SSF52402">
    <property type="entry name" value="Adenine nucleotide alpha hydrolases-like"/>
    <property type="match status" value="1"/>
</dbReference>
<feature type="chain" id="PRO_1000198629" description="tRNA-specific 2-thiouridylase MnmA">
    <location>
        <begin position="1"/>
        <end position="373"/>
    </location>
</feature>
<feature type="region of interest" description="Interaction with target base in tRNA" evidence="1">
    <location>
        <begin position="98"/>
        <end position="100"/>
    </location>
</feature>
<feature type="region of interest" description="Interaction with tRNA" evidence="1">
    <location>
        <begin position="150"/>
        <end position="152"/>
    </location>
</feature>
<feature type="region of interest" description="Interaction with tRNA" evidence="1">
    <location>
        <begin position="312"/>
        <end position="313"/>
    </location>
</feature>
<feature type="active site" description="Nucleophile" evidence="1">
    <location>
        <position position="103"/>
    </location>
</feature>
<feature type="active site" description="Cysteine persulfide intermediate" evidence="1">
    <location>
        <position position="200"/>
    </location>
</feature>
<feature type="binding site" evidence="1">
    <location>
        <begin position="12"/>
        <end position="19"/>
    </location>
    <ligand>
        <name>ATP</name>
        <dbReference type="ChEBI" id="CHEBI:30616"/>
    </ligand>
</feature>
<feature type="binding site" evidence="1">
    <location>
        <position position="38"/>
    </location>
    <ligand>
        <name>ATP</name>
        <dbReference type="ChEBI" id="CHEBI:30616"/>
    </ligand>
</feature>
<feature type="binding site" evidence="1">
    <location>
        <position position="127"/>
    </location>
    <ligand>
        <name>ATP</name>
        <dbReference type="ChEBI" id="CHEBI:30616"/>
    </ligand>
</feature>
<feature type="site" description="Interaction with tRNA" evidence="1">
    <location>
        <position position="128"/>
    </location>
</feature>
<feature type="site" description="Interaction with tRNA" evidence="1">
    <location>
        <position position="344"/>
    </location>
</feature>
<feature type="disulfide bond" description="Alternate" evidence="1">
    <location>
        <begin position="103"/>
        <end position="200"/>
    </location>
</feature>
<evidence type="ECO:0000255" key="1">
    <source>
        <dbReference type="HAMAP-Rule" id="MF_00144"/>
    </source>
</evidence>